<comment type="similarity">
    <text evidence="1">Belongs to the UPF0102 family.</text>
</comment>
<organism>
    <name type="scientific">Rhodopirellula baltica (strain DSM 10527 / NCIMB 13988 / SH1)</name>
    <dbReference type="NCBI Taxonomy" id="243090"/>
    <lineage>
        <taxon>Bacteria</taxon>
        <taxon>Pseudomonadati</taxon>
        <taxon>Planctomycetota</taxon>
        <taxon>Planctomycetia</taxon>
        <taxon>Pirellulales</taxon>
        <taxon>Pirellulaceae</taxon>
        <taxon>Rhodopirellula</taxon>
    </lineage>
</organism>
<proteinExistence type="inferred from homology"/>
<sequence>MATNQFANRTRQTLAWITTCGERVRSWYEDYRFGSIDENAQLGRRGEQAAAQLLRRKGLNVIAESESDRAGEIDLIALRKRPRLIVFVEVKTLSTTRPGHPADRVDENKQARITRAALRYLKRKKLLGITCRFDVVAVWWPRDEPRPTRVEHYESAFNAVGVDSFYG</sequence>
<feature type="chain" id="PRO_0000167376" description="UPF0102 protein RB9115">
    <location>
        <begin position="1"/>
        <end position="167"/>
    </location>
</feature>
<dbReference type="EMBL" id="BX294149">
    <property type="protein sequence ID" value="CAD76094.1"/>
    <property type="molecule type" value="Genomic_DNA"/>
</dbReference>
<dbReference type="RefSeq" id="NP_868717.1">
    <property type="nucleotide sequence ID" value="NC_005027.1"/>
</dbReference>
<dbReference type="RefSeq" id="WP_007328162.1">
    <property type="nucleotide sequence ID" value="NC_005027.1"/>
</dbReference>
<dbReference type="SMR" id="Q7UM23"/>
<dbReference type="FunCoup" id="Q7UM23">
    <property type="interactions" value="208"/>
</dbReference>
<dbReference type="STRING" id="243090.RB9115"/>
<dbReference type="EnsemblBacteria" id="CAD76094">
    <property type="protein sequence ID" value="CAD76094"/>
    <property type="gene ID" value="RB9115"/>
</dbReference>
<dbReference type="KEGG" id="rba:RB9115"/>
<dbReference type="PATRIC" id="fig|243090.15.peg.4370"/>
<dbReference type="eggNOG" id="COG0792">
    <property type="taxonomic scope" value="Bacteria"/>
</dbReference>
<dbReference type="HOGENOM" id="CLU_115353_2_1_0"/>
<dbReference type="InParanoid" id="Q7UM23"/>
<dbReference type="OrthoDB" id="9802516at2"/>
<dbReference type="Proteomes" id="UP000001025">
    <property type="component" value="Chromosome"/>
</dbReference>
<dbReference type="GO" id="GO:0003676">
    <property type="term" value="F:nucleic acid binding"/>
    <property type="evidence" value="ECO:0007669"/>
    <property type="project" value="InterPro"/>
</dbReference>
<dbReference type="CDD" id="cd20736">
    <property type="entry name" value="PoNe_Nuclease"/>
    <property type="match status" value="1"/>
</dbReference>
<dbReference type="Gene3D" id="3.40.1350.10">
    <property type="match status" value="1"/>
</dbReference>
<dbReference type="HAMAP" id="MF_00048">
    <property type="entry name" value="UPF0102"/>
    <property type="match status" value="1"/>
</dbReference>
<dbReference type="InterPro" id="IPR011335">
    <property type="entry name" value="Restrct_endonuc-II-like"/>
</dbReference>
<dbReference type="InterPro" id="IPR011856">
    <property type="entry name" value="tRNA_endonuc-like_dom_sf"/>
</dbReference>
<dbReference type="InterPro" id="IPR003509">
    <property type="entry name" value="UPF0102_YraN-like"/>
</dbReference>
<dbReference type="NCBIfam" id="TIGR00252">
    <property type="entry name" value="YraN family protein"/>
    <property type="match status" value="1"/>
</dbReference>
<dbReference type="PANTHER" id="PTHR34039">
    <property type="entry name" value="UPF0102 PROTEIN YRAN"/>
    <property type="match status" value="1"/>
</dbReference>
<dbReference type="PANTHER" id="PTHR34039:SF1">
    <property type="entry name" value="UPF0102 PROTEIN YRAN"/>
    <property type="match status" value="1"/>
</dbReference>
<dbReference type="Pfam" id="PF02021">
    <property type="entry name" value="UPF0102"/>
    <property type="match status" value="1"/>
</dbReference>
<dbReference type="SUPFAM" id="SSF52980">
    <property type="entry name" value="Restriction endonuclease-like"/>
    <property type="match status" value="1"/>
</dbReference>
<name>Y9115_RHOBA</name>
<evidence type="ECO:0000255" key="1">
    <source>
        <dbReference type="HAMAP-Rule" id="MF_00048"/>
    </source>
</evidence>
<keyword id="KW-1185">Reference proteome</keyword>
<protein>
    <recommendedName>
        <fullName evidence="1">UPF0102 protein RB9115</fullName>
    </recommendedName>
</protein>
<accession>Q7UM23</accession>
<reference key="1">
    <citation type="journal article" date="2003" name="Proc. Natl. Acad. Sci. U.S.A.">
        <title>Complete genome sequence of the marine planctomycete Pirellula sp. strain 1.</title>
        <authorList>
            <person name="Gloeckner F.O."/>
            <person name="Kube M."/>
            <person name="Bauer M."/>
            <person name="Teeling H."/>
            <person name="Lombardot T."/>
            <person name="Ludwig W."/>
            <person name="Gade D."/>
            <person name="Beck A."/>
            <person name="Borzym K."/>
            <person name="Heitmann K."/>
            <person name="Rabus R."/>
            <person name="Schlesner H."/>
            <person name="Amann R."/>
            <person name="Reinhardt R."/>
        </authorList>
    </citation>
    <scope>NUCLEOTIDE SEQUENCE [LARGE SCALE GENOMIC DNA]</scope>
    <source>
        <strain>DSM 10527 / NCIMB 13988 / SH1</strain>
    </source>
</reference>
<gene>
    <name type="ordered locus">RB9115</name>
</gene>